<name>RL35_STRCO</name>
<dbReference type="EMBL" id="AL939109">
    <property type="protein sequence ID" value="CAA20810.1"/>
    <property type="molecule type" value="Genomic_DNA"/>
</dbReference>
<dbReference type="PIR" id="T36834">
    <property type="entry name" value="T36834"/>
</dbReference>
<dbReference type="RefSeq" id="NP_625875.1">
    <property type="nucleotide sequence ID" value="NC_003888.3"/>
</dbReference>
<dbReference type="RefSeq" id="WP_003977225.1">
    <property type="nucleotide sequence ID" value="NZ_VNID01000021.1"/>
</dbReference>
<dbReference type="SMR" id="O88059"/>
<dbReference type="FunCoup" id="O88059">
    <property type="interactions" value="99"/>
</dbReference>
<dbReference type="STRING" id="100226.gene:17759192"/>
<dbReference type="PaxDb" id="100226-SCO1599"/>
<dbReference type="GeneID" id="97466026"/>
<dbReference type="KEGG" id="sco:SCO1599"/>
<dbReference type="PATRIC" id="fig|100226.15.peg.1611"/>
<dbReference type="eggNOG" id="COG0291">
    <property type="taxonomic scope" value="Bacteria"/>
</dbReference>
<dbReference type="HOGENOM" id="CLU_169643_4_2_11"/>
<dbReference type="InParanoid" id="O88059"/>
<dbReference type="OrthoDB" id="9804851at2"/>
<dbReference type="PhylomeDB" id="O88059"/>
<dbReference type="PRO" id="PR:O88059"/>
<dbReference type="Proteomes" id="UP000001973">
    <property type="component" value="Chromosome"/>
</dbReference>
<dbReference type="GO" id="GO:0022625">
    <property type="term" value="C:cytosolic large ribosomal subunit"/>
    <property type="evidence" value="ECO:0000318"/>
    <property type="project" value="GO_Central"/>
</dbReference>
<dbReference type="GO" id="GO:0003735">
    <property type="term" value="F:structural constituent of ribosome"/>
    <property type="evidence" value="ECO:0000318"/>
    <property type="project" value="GO_Central"/>
</dbReference>
<dbReference type="GO" id="GO:0006412">
    <property type="term" value="P:translation"/>
    <property type="evidence" value="ECO:0007669"/>
    <property type="project" value="UniProtKB-UniRule"/>
</dbReference>
<dbReference type="FunFam" id="4.10.410.60:FF:000001">
    <property type="entry name" value="50S ribosomal protein L35"/>
    <property type="match status" value="1"/>
</dbReference>
<dbReference type="Gene3D" id="4.10.410.60">
    <property type="match status" value="1"/>
</dbReference>
<dbReference type="HAMAP" id="MF_00514">
    <property type="entry name" value="Ribosomal_bL35"/>
    <property type="match status" value="1"/>
</dbReference>
<dbReference type="InterPro" id="IPR001706">
    <property type="entry name" value="Ribosomal_bL35"/>
</dbReference>
<dbReference type="InterPro" id="IPR021137">
    <property type="entry name" value="Ribosomal_bL35-like"/>
</dbReference>
<dbReference type="InterPro" id="IPR018265">
    <property type="entry name" value="Ribosomal_bL35_CS"/>
</dbReference>
<dbReference type="InterPro" id="IPR037229">
    <property type="entry name" value="Ribosomal_bL35_sf"/>
</dbReference>
<dbReference type="NCBIfam" id="TIGR00001">
    <property type="entry name" value="rpmI_bact"/>
    <property type="match status" value="1"/>
</dbReference>
<dbReference type="PANTHER" id="PTHR33343">
    <property type="entry name" value="54S RIBOSOMAL PROTEIN BL35M"/>
    <property type="match status" value="1"/>
</dbReference>
<dbReference type="PANTHER" id="PTHR33343:SF1">
    <property type="entry name" value="LARGE RIBOSOMAL SUBUNIT PROTEIN BL35M"/>
    <property type="match status" value="1"/>
</dbReference>
<dbReference type="Pfam" id="PF01632">
    <property type="entry name" value="Ribosomal_L35p"/>
    <property type="match status" value="1"/>
</dbReference>
<dbReference type="PRINTS" id="PR00064">
    <property type="entry name" value="RIBOSOMALL35"/>
</dbReference>
<dbReference type="SUPFAM" id="SSF143034">
    <property type="entry name" value="L35p-like"/>
    <property type="match status" value="1"/>
</dbReference>
<dbReference type="PROSITE" id="PS00936">
    <property type="entry name" value="RIBOSOMAL_L35"/>
    <property type="match status" value="1"/>
</dbReference>
<proteinExistence type="inferred from homology"/>
<comment type="similarity">
    <text evidence="1">Belongs to the bacterial ribosomal protein bL35 family.</text>
</comment>
<reference key="1">
    <citation type="journal article" date="2002" name="Nature">
        <title>Complete genome sequence of the model actinomycete Streptomyces coelicolor A3(2).</title>
        <authorList>
            <person name="Bentley S.D."/>
            <person name="Chater K.F."/>
            <person name="Cerdeno-Tarraga A.-M."/>
            <person name="Challis G.L."/>
            <person name="Thomson N.R."/>
            <person name="James K.D."/>
            <person name="Harris D.E."/>
            <person name="Quail M.A."/>
            <person name="Kieser H."/>
            <person name="Harper D."/>
            <person name="Bateman A."/>
            <person name="Brown S."/>
            <person name="Chandra G."/>
            <person name="Chen C.W."/>
            <person name="Collins M."/>
            <person name="Cronin A."/>
            <person name="Fraser A."/>
            <person name="Goble A."/>
            <person name="Hidalgo J."/>
            <person name="Hornsby T."/>
            <person name="Howarth S."/>
            <person name="Huang C.-H."/>
            <person name="Kieser T."/>
            <person name="Larke L."/>
            <person name="Murphy L.D."/>
            <person name="Oliver K."/>
            <person name="O'Neil S."/>
            <person name="Rabbinowitsch E."/>
            <person name="Rajandream M.A."/>
            <person name="Rutherford K.M."/>
            <person name="Rutter S."/>
            <person name="Seeger K."/>
            <person name="Saunders D."/>
            <person name="Sharp S."/>
            <person name="Squares R."/>
            <person name="Squares S."/>
            <person name="Taylor K."/>
            <person name="Warren T."/>
            <person name="Wietzorrek A."/>
            <person name="Woodward J.R."/>
            <person name="Barrell B.G."/>
            <person name="Parkhill J."/>
            <person name="Hopwood D.A."/>
        </authorList>
    </citation>
    <scope>NUCLEOTIDE SEQUENCE [LARGE SCALE GENOMIC DNA]</scope>
    <source>
        <strain>ATCC BAA-471 / A3(2) / M145</strain>
    </source>
</reference>
<evidence type="ECO:0000255" key="1">
    <source>
        <dbReference type="HAMAP-Rule" id="MF_00514"/>
    </source>
</evidence>
<evidence type="ECO:0000305" key="2"/>
<accession>O88059</accession>
<feature type="chain" id="PRO_0000177430" description="Large ribosomal subunit protein bL35">
    <location>
        <begin position="1"/>
        <end position="64"/>
    </location>
</feature>
<keyword id="KW-1185">Reference proteome</keyword>
<keyword id="KW-0687">Ribonucleoprotein</keyword>
<keyword id="KW-0689">Ribosomal protein</keyword>
<gene>
    <name evidence="1" type="primary">rpmI</name>
    <name type="ordered locus">SCO1599</name>
    <name type="ORF">SCI35.21c</name>
</gene>
<sequence length="64" mass="7022">MPKNKSHSGASKRFKITGSGKVLRERAGKRHLLEHKSSRVTRRLTGNAEMAPGDAAKIKKLLGK</sequence>
<protein>
    <recommendedName>
        <fullName evidence="1">Large ribosomal subunit protein bL35</fullName>
    </recommendedName>
    <alternativeName>
        <fullName evidence="2">50S ribosomal protein L35</fullName>
    </alternativeName>
</protein>
<organism>
    <name type="scientific">Streptomyces coelicolor (strain ATCC BAA-471 / A3(2) / M145)</name>
    <dbReference type="NCBI Taxonomy" id="100226"/>
    <lineage>
        <taxon>Bacteria</taxon>
        <taxon>Bacillati</taxon>
        <taxon>Actinomycetota</taxon>
        <taxon>Actinomycetes</taxon>
        <taxon>Kitasatosporales</taxon>
        <taxon>Streptomycetaceae</taxon>
        <taxon>Streptomyces</taxon>
        <taxon>Streptomyces albidoflavus group</taxon>
    </lineage>
</organism>